<sequence length="263" mass="25957">MKISQLFLGLVACSTAFAYAGIDGISSNESNIKIGAAANASHPGGVAAVSVQAAGAPYNAFTGFSSLKGLAQAFAAQGTSNTNVTVGSKTFNISHIPVSAMPPSHSALGNFNFGQVGTQEVYFGEWWKAGDTPASASHTVYYAGDNTNTTVPTAGTATYTVAGINGSASNLLSGTFTANYGAGTLEGTLTGTGTAVSSLSLDGVAFNPGTAAFAGLATANGTAGVDNSGVVQGQFFGANASALAGIAQFDNVSYNTAFGGAKN</sequence>
<evidence type="ECO:0000255" key="1"/>
<evidence type="ECO:0000269" key="2">
    <source>
    </source>
</evidence>
<evidence type="ECO:0000303" key="3">
    <source>
    </source>
</evidence>
<evidence type="ECO:0000312" key="4">
    <source>
        <dbReference type="EMBL" id="AKA32698.1"/>
    </source>
</evidence>
<evidence type="ECO:0000312" key="5">
    <source>
        <dbReference type="EMBL" id="EGY2378849.1"/>
    </source>
</evidence>
<evidence type="ECO:0000312" key="6">
    <source>
        <dbReference type="EMBL" id="MBD0220004.1"/>
    </source>
</evidence>
<evidence type="ECO:0000312" key="7">
    <source>
        <dbReference type="EMBL" id="MDT1913018.1"/>
    </source>
</evidence>
<evidence type="ECO:0000312" key="8">
    <source>
        <dbReference type="EMBL" id="OIG67027.1"/>
    </source>
</evidence>
<evidence type="ECO:0000312" key="9">
    <source>
        <dbReference type="EMBL" id="PRN31165.1"/>
    </source>
</evidence>
<evidence type="ECO:0000312" key="10">
    <source>
        <dbReference type="EMBL" id="SSI23764.1"/>
    </source>
</evidence>
<evidence type="ECO:0000312" key="11">
    <source>
        <dbReference type="EMBL" id="SST18736.1"/>
    </source>
</evidence>
<evidence type="ECO:0007744" key="12">
    <source>
        <dbReference type="PDB" id="7RE4"/>
    </source>
</evidence>
<evidence type="ECO:0007744" key="13">
    <source>
        <dbReference type="PDB" id="7REA"/>
    </source>
</evidence>
<evidence type="ECO:0007744" key="14">
    <source>
        <dbReference type="PDB" id="7RED"/>
    </source>
</evidence>
<evidence type="ECO:0007829" key="15">
    <source>
        <dbReference type="PDB" id="7REA"/>
    </source>
</evidence>
<evidence type="ECO:0007829" key="16">
    <source>
        <dbReference type="PDB" id="7RED"/>
    </source>
</evidence>
<name>HPHA_ACIBA</name>
<proteinExistence type="evidence at protein level"/>
<accession>A0A059ZRB8</accession>
<feature type="signal peptide" evidence="1">
    <location>
        <begin position="1"/>
        <end position="20"/>
    </location>
</feature>
<feature type="chain" id="PRO_5015026615" description="Hemophilin" evidence="1">
    <location>
        <begin position="21"/>
        <end position="263"/>
    </location>
</feature>
<feature type="binding site" description="axial binding residue" evidence="2 14">
    <location>
        <position position="42"/>
    </location>
    <ligand>
        <name>heme b</name>
        <dbReference type="ChEBI" id="CHEBI:60344"/>
    </ligand>
    <ligandPart>
        <name>Fe</name>
        <dbReference type="ChEBI" id="CHEBI:18248"/>
    </ligandPart>
</feature>
<feature type="binding site" evidence="2 14">
    <location>
        <position position="58"/>
    </location>
    <ligand>
        <name>heme b</name>
        <dbReference type="ChEBI" id="CHEBI:60344"/>
    </ligand>
</feature>
<feature type="binding site" evidence="2 14">
    <location>
        <position position="104"/>
    </location>
    <ligand>
        <name>heme b</name>
        <dbReference type="ChEBI" id="CHEBI:60344"/>
    </ligand>
</feature>
<feature type="binding site" description="axial binding residue" evidence="2 14">
    <location>
        <position position="105"/>
    </location>
    <ligand>
        <name>heme b</name>
        <dbReference type="ChEBI" id="CHEBI:60344"/>
    </ligand>
    <ligandPart>
        <name>Fe</name>
        <dbReference type="ChEBI" id="CHEBI:18248"/>
    </ligandPart>
</feature>
<feature type="mutagenesis site" description="Cannot serve as an heme/iron source, shows reduced binding to hemoglobin and does not bind heme; when associated with A-105." evidence="2">
    <original>H</original>
    <variation>A</variation>
    <location>
        <position position="42"/>
    </location>
</feature>
<feature type="mutagenesis site" description="Cannot serve as an heme/iron source, shows reduced binding to hemoglobin and does not bind heme; when associated with A-42." evidence="2">
    <original>H</original>
    <variation>A</variation>
    <location>
        <position position="105"/>
    </location>
</feature>
<feature type="strand" evidence="15">
    <location>
        <begin position="22"/>
        <end position="27"/>
    </location>
</feature>
<feature type="turn" evidence="15">
    <location>
        <begin position="29"/>
        <end position="31"/>
    </location>
</feature>
<feature type="strand" evidence="15">
    <location>
        <begin position="32"/>
        <end position="36"/>
    </location>
</feature>
<feature type="strand" evidence="15">
    <location>
        <begin position="46"/>
        <end position="51"/>
    </location>
</feature>
<feature type="turn" evidence="15">
    <location>
        <begin position="56"/>
        <end position="59"/>
    </location>
</feature>
<feature type="strand" evidence="15">
    <location>
        <begin position="60"/>
        <end position="63"/>
    </location>
</feature>
<feature type="helix" evidence="15">
    <location>
        <begin position="64"/>
        <end position="73"/>
    </location>
</feature>
<feature type="helix" evidence="15">
    <location>
        <begin position="75"/>
        <end position="77"/>
    </location>
</feature>
<feature type="strand" evidence="15">
    <location>
        <begin position="80"/>
        <end position="86"/>
    </location>
</feature>
<feature type="strand" evidence="15">
    <location>
        <begin position="89"/>
        <end position="96"/>
    </location>
</feature>
<feature type="helix" evidence="15">
    <location>
        <begin position="98"/>
        <end position="100"/>
    </location>
</feature>
<feature type="helix" evidence="15">
    <location>
        <begin position="103"/>
        <end position="108"/>
    </location>
</feature>
<feature type="strand" evidence="15">
    <location>
        <begin position="110"/>
        <end position="116"/>
    </location>
</feature>
<feature type="strand" evidence="15">
    <location>
        <begin position="119"/>
        <end position="127"/>
    </location>
</feature>
<feature type="strand" evidence="15">
    <location>
        <begin position="139"/>
        <end position="145"/>
    </location>
</feature>
<feature type="strand" evidence="15">
    <location>
        <begin position="153"/>
        <end position="166"/>
    </location>
</feature>
<feature type="strand" evidence="16">
    <location>
        <begin position="168"/>
        <end position="170"/>
    </location>
</feature>
<feature type="strand" evidence="15">
    <location>
        <begin position="172"/>
        <end position="179"/>
    </location>
</feature>
<feature type="turn" evidence="15">
    <location>
        <begin position="180"/>
        <end position="183"/>
    </location>
</feature>
<feature type="strand" evidence="15">
    <location>
        <begin position="184"/>
        <end position="190"/>
    </location>
</feature>
<feature type="strand" evidence="15">
    <location>
        <begin position="192"/>
        <end position="205"/>
    </location>
</feature>
<feature type="strand" evidence="15">
    <location>
        <begin position="212"/>
        <end position="221"/>
    </location>
</feature>
<feature type="strand" evidence="15">
    <location>
        <begin position="226"/>
        <end position="237"/>
    </location>
</feature>
<feature type="helix" evidence="15">
    <location>
        <begin position="238"/>
        <end position="240"/>
    </location>
</feature>
<feature type="strand" evidence="15">
    <location>
        <begin position="242"/>
        <end position="248"/>
    </location>
</feature>
<feature type="helix" evidence="15">
    <location>
        <begin position="252"/>
        <end position="254"/>
    </location>
</feature>
<feature type="strand" evidence="15">
    <location>
        <begin position="256"/>
        <end position="262"/>
    </location>
</feature>
<organism>
    <name type="scientific">Acinetobacter baumannii</name>
    <dbReference type="NCBI Taxonomy" id="470"/>
    <lineage>
        <taxon>Bacteria</taxon>
        <taxon>Pseudomonadati</taxon>
        <taxon>Pseudomonadota</taxon>
        <taxon>Gammaproteobacteria</taxon>
        <taxon>Moraxellales</taxon>
        <taxon>Moraxellaceae</taxon>
        <taxon>Acinetobacter</taxon>
        <taxon>Acinetobacter calcoaceticus/baumannii complex</taxon>
    </lineage>
</organism>
<comment type="function">
    <text evidence="2">Part of a high affinity heme acquisition system (PubMed:34725337). Functions as a hemophore that acquires heme from human hemoglobin and delivers the heme to its cognate receptor, HphR, facilitating transport of heme across the bacterial outer membrane (PubMed:34725337). Apo HphA interacts specifically with human hemoglobin and steals heme through a passive process probably due to its high affinity for heme (PubMed:34725337). It can also acquire heme complexed to human serum albumin (PubMed:34725337). Plays a supporting role for full virulence, acting as an accessory factor that enhances the process of heme uptake (PubMed:34725337).</text>
</comment>
<comment type="subunit">
    <text evidence="2">Monomer in solution (PubMed:34725337). Interacts with host hemoglobin (PubMed:34725337).</text>
</comment>
<comment type="subcellular location">
    <subcellularLocation>
        <location evidence="2">Secreted</location>
    </subcellularLocation>
    <text evidence="2">Secretion through the outer membrane is HsmA-dependent.</text>
</comment>
<comment type="induction">
    <text evidence="2">Part of the hemO gene cluster.</text>
</comment>
<comment type="domain">
    <text evidence="2">Contains an N-terminal clamp-like domain that binds heme and a C-terminal eight-stranded beta-barrel domain (PubMed:34725337). The loop containing His-42 undergoes a large conformational change upon heme binding and release (PubMed:34725337).</text>
</comment>
<comment type="disruption phenotype">
    <text evidence="2">In a mouse pulmonary infection model, the mutant shows a small decrease in bacterial lung burden and systemic spread.</text>
</comment>
<dbReference type="EMBL" id="CP008706">
    <property type="protein sequence ID" value="AKA32698.1"/>
    <property type="molecule type" value="Genomic_DNA"/>
</dbReference>
<dbReference type="EMBL" id="LYKI01000069">
    <property type="protein sequence ID" value="OIG67027.1"/>
    <property type="molecule type" value="Genomic_DNA"/>
</dbReference>
<dbReference type="EMBL" id="NEPB01000055">
    <property type="protein sequence ID" value="PRN31165.1"/>
    <property type="molecule type" value="Genomic_DNA"/>
</dbReference>
<dbReference type="EMBL" id="UFDJ01000002">
    <property type="protein sequence ID" value="SSI23764.1"/>
    <property type="molecule type" value="Genomic_DNA"/>
</dbReference>
<dbReference type="EMBL" id="UFMQ01000002">
    <property type="protein sequence ID" value="SST18736.1"/>
    <property type="molecule type" value="Genomic_DNA"/>
</dbReference>
<dbReference type="EMBL" id="JACSVK010000017">
    <property type="protein sequence ID" value="MBD0220004.1"/>
    <property type="molecule type" value="Genomic_DNA"/>
</dbReference>
<dbReference type="EMBL" id="AAYLMQ010000052">
    <property type="protein sequence ID" value="EGY2378849.1"/>
    <property type="molecule type" value="Genomic_DNA"/>
</dbReference>
<dbReference type="EMBL" id="VMAW01000041">
    <property type="protein sequence ID" value="MDT1913018.1"/>
    <property type="molecule type" value="Genomic_DNA"/>
</dbReference>
<dbReference type="RefSeq" id="WP_001991318.1">
    <property type="nucleotide sequence ID" value="NZ_WYAO01000005.1"/>
</dbReference>
<dbReference type="PDB" id="7RE4">
    <property type="method" value="X-ray"/>
    <property type="resolution" value="1.87 A"/>
    <property type="chains" value="A/C/E=21-263"/>
</dbReference>
<dbReference type="PDB" id="7REA">
    <property type="method" value="X-ray"/>
    <property type="resolution" value="1.49 A"/>
    <property type="chains" value="A=21-263"/>
</dbReference>
<dbReference type="PDB" id="7RED">
    <property type="method" value="X-ray"/>
    <property type="resolution" value="1.53 A"/>
    <property type="chains" value="A=21-263"/>
</dbReference>
<dbReference type="PDBsum" id="7RE4"/>
<dbReference type="PDBsum" id="7REA"/>
<dbReference type="PDBsum" id="7RED"/>
<dbReference type="SMR" id="A0A059ZRB8"/>
<dbReference type="PATRIC" id="fig|470.1288.peg.2218"/>
<dbReference type="OMA" id="THTAYYS"/>
<dbReference type="Proteomes" id="UP000032746">
    <property type="component" value="Chromosome"/>
</dbReference>
<dbReference type="Proteomes" id="UP000179937">
    <property type="component" value="Unassembled WGS sequence"/>
</dbReference>
<dbReference type="Proteomes" id="UP000237823">
    <property type="component" value="Unassembled WGS sequence"/>
</dbReference>
<dbReference type="Proteomes" id="UP000252694">
    <property type="component" value="Unassembled WGS sequence"/>
</dbReference>
<dbReference type="Proteomes" id="UP000634608">
    <property type="component" value="Unassembled WGS sequence"/>
</dbReference>
<dbReference type="GO" id="GO:0005576">
    <property type="term" value="C:extracellular region"/>
    <property type="evidence" value="ECO:0007669"/>
    <property type="project" value="UniProtKB-SubCell"/>
</dbReference>
<dbReference type="GO" id="GO:0046872">
    <property type="term" value="F:metal ion binding"/>
    <property type="evidence" value="ECO:0007669"/>
    <property type="project" value="UniProtKB-KW"/>
</dbReference>
<dbReference type="Gene3D" id="2.40.160.90">
    <property type="match status" value="1"/>
</dbReference>
<dbReference type="InterPro" id="IPR054536">
    <property type="entry name" value="HphA_C"/>
</dbReference>
<dbReference type="InterPro" id="IPR054535">
    <property type="entry name" value="HphA_N"/>
</dbReference>
<dbReference type="InterPro" id="IPR011250">
    <property type="entry name" value="OMP/PagP_b-brl"/>
</dbReference>
<dbReference type="InterPro" id="IPR054843">
    <property type="entry name" value="Slam_hemophilin_C"/>
</dbReference>
<dbReference type="NCBIfam" id="NF041636">
    <property type="entry name" value="slam_lipo"/>
    <property type="match status" value="1"/>
</dbReference>
<dbReference type="Pfam" id="PF22829">
    <property type="entry name" value="HphA_C"/>
    <property type="match status" value="1"/>
</dbReference>
<dbReference type="Pfam" id="PF22828">
    <property type="entry name" value="HphA_N"/>
    <property type="match status" value="1"/>
</dbReference>
<dbReference type="SUPFAM" id="SSF56925">
    <property type="entry name" value="OMPA-like"/>
    <property type="match status" value="1"/>
</dbReference>
<gene>
    <name evidence="3" type="primary">hphA</name>
    <name evidence="8" type="ORF">A7M90_10525</name>
    <name evidence="4" type="ORF">ABUW_2984</name>
    <name evidence="9" type="ORF">B9W25_16940</name>
    <name evidence="7" type="ORF">FPK81_18595</name>
    <name evidence="6" type="ORF">IAG11_08875</name>
    <name evidence="5" type="ORF">JHZ39_003271</name>
    <name evidence="11" type="ORF">SAMEA104305318_00888</name>
    <name evidence="10" type="ORF">SAMEA4394745_00722</name>
</gene>
<keyword id="KW-0002">3D-structure</keyword>
<keyword id="KW-0349">Heme</keyword>
<keyword id="KW-0408">Iron</keyword>
<keyword id="KW-0479">Metal-binding</keyword>
<keyword id="KW-0964">Secreted</keyword>
<keyword id="KW-0732">Signal</keyword>
<keyword id="KW-0843">Virulence</keyword>
<protein>
    <recommendedName>
        <fullName evidence="3">Hemophilin</fullName>
    </recommendedName>
    <alternativeName>
        <fullName evidence="3">Heme scavenger</fullName>
    </alternativeName>
    <alternativeName>
        <fullName evidence="3">Heme-binding protein HphA</fullName>
    </alternativeName>
</protein>
<reference evidence="4" key="1">
    <citation type="journal article" date="2015" name="J. Bacteriol.">
        <title>Resources for Genetic and Genomic Analysis of Emerging Pathogen Acinetobacter baumannii.</title>
        <authorList>
            <person name="Gallagher L.A."/>
            <person name="Ramage E."/>
            <person name="Weiss E.J."/>
            <person name="Radey M."/>
            <person name="Hayden H.S."/>
            <person name="Held K.G."/>
            <person name="Huse H.K."/>
            <person name="Zurawski D.V."/>
            <person name="Brittnacher M.J."/>
            <person name="Manoil C."/>
        </authorList>
    </citation>
    <scope>NUCLEOTIDE SEQUENCE [LARGE SCALE GENOMIC DNA]</scope>
    <source>
        <strain>AB5075-UW</strain>
    </source>
</reference>
<reference evidence="8" key="2">
    <citation type="submission" date="2016-05" db="EMBL/GenBank/DDBJ databases">
        <title>The evolution of Acinetobacter baumannii in vivo.</title>
        <authorList>
            <person name="Hua X."/>
            <person name="Yu Y."/>
        </authorList>
    </citation>
    <scope>NUCLEOTIDE SEQUENCE [LARGE SCALE GENOMIC DNA]</scope>
    <source>
        <strain>XH647</strain>
    </source>
</reference>
<reference evidence="9" key="3">
    <citation type="submission" date="2017-04" db="EMBL/GenBank/DDBJ databases">
        <title>Comparison of Acinetobacter baumannii whole genome sequences from two major hospitals in Kuwait.</title>
        <authorList>
            <person name="Nasser K."/>
            <person name="Habibi N."/>
            <person name="Khan M.W."/>
            <person name="Purohit P."/>
            <person name="Al-Obaid I."/>
            <person name="Dhar R."/>
            <person name="Al-Fouzan W."/>
            <person name="Mustafa A.S."/>
        </authorList>
    </citation>
    <scope>NUCLEOTIDE SEQUENCE [LARGE SCALE GENOMIC DNA]</scope>
    <source>
        <strain>KUFAR57</strain>
    </source>
</reference>
<reference evidence="10 11" key="4">
    <citation type="submission" date="2018-07" db="EMBL/GenBank/DDBJ databases">
        <authorList>
            <consortium name="Pathogen Informatics"/>
        </authorList>
    </citation>
    <scope>NUCLEOTIDE SEQUENCE [LARGE SCALE GENOMIC DNA]</scope>
    <source>
        <strain>4300STDY6542375</strain>
        <strain>4300STDY7045823</strain>
    </source>
</reference>
<reference evidence="6" key="5">
    <citation type="submission" date="2020-08" db="EMBL/GenBank/DDBJ databases">
        <title>Diversity of carbapenem-resistant Acinetobacter baumannii and bacteriophage-mediated spread of the Oxa23 carbapenemase.</title>
        <authorList>
            <person name="Abouelfetouh A."/>
            <person name="Mattock J."/>
            <person name="Turner D."/>
            <person name="Li E."/>
            <person name="Evans B.A."/>
        </authorList>
    </citation>
    <scope>NUCLEOTIDE SEQUENCE [LARGE SCALE GENOMIC DNA]</scope>
    <source>
        <strain>A86</strain>
    </source>
</reference>
<reference evidence="5" key="6">
    <citation type="submission" date="2020-12" db="EMBL/GenBank/DDBJ databases">
        <authorList>
            <consortium name="Clinical and Environmental Microbiology Branch: Whole genome sequencing antimicrobial resistance pathogens in the healthcare setting"/>
        </authorList>
    </citation>
    <scope>NUCLEOTIDE SEQUENCE [LARGE SCALE GENOMIC DNA]</scope>
    <source>
        <strain>2018HL-00813</strain>
    </source>
</reference>
<reference evidence="7" key="7">
    <citation type="submission" date="2023-09" db="EMBL/GenBank/DDBJ databases">
        <title>Biological characteristics of mucoid Acinetobacter baumannii from a general hospital in China.</title>
        <authorList>
            <person name="Hua X."/>
            <person name="Yu Y."/>
        </authorList>
    </citation>
    <scope>NUCLEOTIDE SEQUENCE [LARGE SCALE GENOMIC DNA]</scope>
    <source>
        <strain>N35</strain>
    </source>
</reference>
<reference evidence="12 13 14" key="8">
    <citation type="journal article" date="2021" name="Nat. Commun.">
        <title>A Slam-dependent hemophore contributes to heme acquisition in the bacterial pathogen Acinetobacter baumannii.</title>
        <authorList>
            <person name="Bateman T.J."/>
            <person name="Shah M."/>
            <person name="Ho T.P."/>
            <person name="Shin H.E."/>
            <person name="Pan C."/>
            <person name="Harris G."/>
            <person name="Fegan J.E."/>
            <person name="Islam E.A."/>
            <person name="Ahn S.K."/>
            <person name="Hooda Y."/>
            <person name="Gray-Owen S.D."/>
            <person name="Chen W."/>
            <person name="Moraes T.F."/>
        </authorList>
    </citation>
    <scope>X-RAY CRYSTALLOGRAPHY (1.49 ANGSTROMS) OF 21-263 OF APOPROTEIN AND IN COMPLEX WITH HEME B</scope>
    <scope>FUNCTION</scope>
    <scope>SUBUNIT</scope>
    <scope>INTERACTION WITH HOST HEMOPROTEIN</scope>
    <scope>SUBCELLULAR LOCATION</scope>
    <scope>GENE CLUSTER</scope>
    <scope>DOMAIN</scope>
    <scope>DISRUPTION PHENOTYPE</scope>
    <scope>MUTAGENESIS OF HIS-42 AND HIS-105</scope>
    <source>
        <strain>AB5075</strain>
    </source>
</reference>